<evidence type="ECO:0000250" key="1"/>
<evidence type="ECO:0000305" key="2"/>
<organism>
    <name type="scientific">Salmonella typhi</name>
    <dbReference type="NCBI Taxonomy" id="90370"/>
    <lineage>
        <taxon>Bacteria</taxon>
        <taxon>Pseudomonadati</taxon>
        <taxon>Pseudomonadota</taxon>
        <taxon>Gammaproteobacteria</taxon>
        <taxon>Enterobacterales</taxon>
        <taxon>Enterobacteriaceae</taxon>
        <taxon>Salmonella</taxon>
    </lineage>
</organism>
<reference key="1">
    <citation type="journal article" date="2001" name="Nature">
        <title>Complete genome sequence of a multiple drug resistant Salmonella enterica serovar Typhi CT18.</title>
        <authorList>
            <person name="Parkhill J."/>
            <person name="Dougan G."/>
            <person name="James K.D."/>
            <person name="Thomson N.R."/>
            <person name="Pickard D."/>
            <person name="Wain J."/>
            <person name="Churcher C.M."/>
            <person name="Mungall K.L."/>
            <person name="Bentley S.D."/>
            <person name="Holden M.T.G."/>
            <person name="Sebaihia M."/>
            <person name="Baker S."/>
            <person name="Basham D."/>
            <person name="Brooks K."/>
            <person name="Chillingworth T."/>
            <person name="Connerton P."/>
            <person name="Cronin A."/>
            <person name="Davis P."/>
            <person name="Davies R.M."/>
            <person name="Dowd L."/>
            <person name="White N."/>
            <person name="Farrar J."/>
            <person name="Feltwell T."/>
            <person name="Hamlin N."/>
            <person name="Haque A."/>
            <person name="Hien T.T."/>
            <person name="Holroyd S."/>
            <person name="Jagels K."/>
            <person name="Krogh A."/>
            <person name="Larsen T.S."/>
            <person name="Leather S."/>
            <person name="Moule S."/>
            <person name="O'Gaora P."/>
            <person name="Parry C."/>
            <person name="Quail M.A."/>
            <person name="Rutherford K.M."/>
            <person name="Simmonds M."/>
            <person name="Skelton J."/>
            <person name="Stevens K."/>
            <person name="Whitehead S."/>
            <person name="Barrell B.G."/>
        </authorList>
    </citation>
    <scope>NUCLEOTIDE SEQUENCE [LARGE SCALE GENOMIC DNA]</scope>
    <source>
        <strain>CT18</strain>
    </source>
</reference>
<reference key="2">
    <citation type="journal article" date="2003" name="J. Bacteriol.">
        <title>Comparative genomics of Salmonella enterica serovar Typhi strains Ty2 and CT18.</title>
        <authorList>
            <person name="Deng W."/>
            <person name="Liou S.-R."/>
            <person name="Plunkett G. III"/>
            <person name="Mayhew G.F."/>
            <person name="Rose D.J."/>
            <person name="Burland V."/>
            <person name="Kodoyianni V."/>
            <person name="Schwartz D.C."/>
            <person name="Blattner F.R."/>
        </authorList>
    </citation>
    <scope>NUCLEOTIDE SEQUENCE [LARGE SCALE GENOMIC DNA]</scope>
    <source>
        <strain>ATCC 700931 / Ty2</strain>
    </source>
</reference>
<keyword id="KW-0227">DNA damage</keyword>
<keyword id="KW-0234">DNA repair</keyword>
<keyword id="KW-0269">Exonuclease</keyword>
<keyword id="KW-0378">Hydrolase</keyword>
<keyword id="KW-0460">Magnesium</keyword>
<keyword id="KW-0479">Metal-binding</keyword>
<keyword id="KW-0540">Nuclease</keyword>
<comment type="function">
    <text evidence="1">Major apurinic-apyrimidinic endonuclease of E.coli. It removes the damaged DNA at cytosines and guanines by cleaving on the 3'-side of the AP site by a beta-elimination reaction. It exhibits 3'-5'-exonuclease, 3'-phosphomonoesterase, 3'-repair diesterase and ribonuclease H activities (By similarity).</text>
</comment>
<comment type="catalytic activity">
    <reaction>
        <text>Exonucleolytic cleavage in the 3'- to 5'-direction to yield nucleoside 5'-phosphates.</text>
        <dbReference type="EC" id="3.1.11.2"/>
    </reaction>
</comment>
<comment type="cofactor">
    <cofactor evidence="1">
        <name>Mg(2+)</name>
        <dbReference type="ChEBI" id="CHEBI:18420"/>
    </cofactor>
    <cofactor evidence="1">
        <name>Mn(2+)</name>
        <dbReference type="ChEBI" id="CHEBI:29035"/>
    </cofactor>
    <text evidence="1">Probably binds two magnesium or manganese ions per subunit.</text>
</comment>
<comment type="subunit">
    <text evidence="1">Monomer.</text>
</comment>
<comment type="similarity">
    <text evidence="2">Belongs to the DNA repair enzymes AP/ExoA family.</text>
</comment>
<protein>
    <recommendedName>
        <fullName>Exodeoxyribonuclease III</fullName>
        <shortName>EXO III</shortName>
        <shortName>Exonuclease III</shortName>
        <ecNumber>3.1.11.2</ecNumber>
    </recommendedName>
    <alternativeName>
        <fullName>AP endonuclease VI</fullName>
    </alternativeName>
</protein>
<sequence>MKFVSFNINGLRARPHQLEAIVEKHQPDVIGLQETKVHDEMFPLEEVAKLGYNVFYHGQKGHYGVALLTKATPISVRRGFPDDGEEAQRRIIMAEIPSPLGNITVINGYFPQGESRDHPLKFPAKAQFYQNLQNYLETELKCDNPVLIMGDMNISPTDLDIGIGEENRKRWLRTGKCSFLPEEREWMSRLLKWGLVDTFRQANPQTMDKFSWFDYRSKGFVDNRGLRIDLLLASAPLAERCAETGIDYDIRSMEKPSDHAPVWATFRV</sequence>
<feature type="chain" id="PRO_0000200023" description="Exodeoxyribonuclease III">
    <location>
        <begin position="1"/>
        <end position="268"/>
    </location>
</feature>
<feature type="active site" evidence="1">
    <location>
        <position position="109"/>
    </location>
</feature>
<feature type="active site" description="Proton donor/acceptor" evidence="1">
    <location>
        <position position="151"/>
    </location>
</feature>
<feature type="binding site" evidence="1">
    <location>
        <position position="34"/>
    </location>
    <ligand>
        <name>Mg(2+)</name>
        <dbReference type="ChEBI" id="CHEBI:18420"/>
        <label>1</label>
    </ligand>
</feature>
<feature type="binding site" evidence="1">
    <location>
        <position position="151"/>
    </location>
    <ligand>
        <name>Mg(2+)</name>
        <dbReference type="ChEBI" id="CHEBI:18420"/>
        <label>2</label>
    </ligand>
</feature>
<feature type="binding site" evidence="1">
    <location>
        <position position="153"/>
    </location>
    <ligand>
        <name>Mg(2+)</name>
        <dbReference type="ChEBI" id="CHEBI:18420"/>
        <label>2</label>
    </ligand>
</feature>
<feature type="binding site" evidence="1">
    <location>
        <position position="258"/>
    </location>
    <ligand>
        <name>Mg(2+)</name>
        <dbReference type="ChEBI" id="CHEBI:18420"/>
        <label>1</label>
    </ligand>
</feature>
<feature type="site" description="Transition state stabilizer" evidence="1">
    <location>
        <position position="153"/>
    </location>
</feature>
<feature type="site" description="Important for catalytic activity" evidence="1">
    <location>
        <position position="229"/>
    </location>
</feature>
<feature type="site" description="Interaction with DNA substrate" evidence="1">
    <location>
        <position position="259"/>
    </location>
</feature>
<proteinExistence type="inferred from homology"/>
<accession>P0A1B0</accession>
<accession>Q9Z612</accession>
<name>EX3_SALTI</name>
<dbReference type="EC" id="3.1.11.2"/>
<dbReference type="EMBL" id="AL513382">
    <property type="protein sequence ID" value="CAD02052.1"/>
    <property type="molecule type" value="Genomic_DNA"/>
</dbReference>
<dbReference type="EMBL" id="AE014613">
    <property type="protein sequence ID" value="AAO68838.1"/>
    <property type="molecule type" value="Genomic_DNA"/>
</dbReference>
<dbReference type="RefSeq" id="NP_456210.1">
    <property type="nucleotide sequence ID" value="NC_003198.1"/>
</dbReference>
<dbReference type="RefSeq" id="WP_000673954.1">
    <property type="nucleotide sequence ID" value="NZ_WSUR01000034.1"/>
</dbReference>
<dbReference type="SMR" id="P0A1B0"/>
<dbReference type="STRING" id="220341.gene:17585744"/>
<dbReference type="KEGG" id="stt:t1181"/>
<dbReference type="KEGG" id="sty:STY1812"/>
<dbReference type="PATRIC" id="fig|220341.7.peg.1825"/>
<dbReference type="eggNOG" id="COG0708">
    <property type="taxonomic scope" value="Bacteria"/>
</dbReference>
<dbReference type="HOGENOM" id="CLU_027539_0_3_6"/>
<dbReference type="OMA" id="WWSYRGR"/>
<dbReference type="OrthoDB" id="9803914at2"/>
<dbReference type="Proteomes" id="UP000000541">
    <property type="component" value="Chromosome"/>
</dbReference>
<dbReference type="Proteomes" id="UP000002670">
    <property type="component" value="Chromosome"/>
</dbReference>
<dbReference type="GO" id="GO:0003677">
    <property type="term" value="F:DNA binding"/>
    <property type="evidence" value="ECO:0007669"/>
    <property type="project" value="InterPro"/>
</dbReference>
<dbReference type="GO" id="GO:0008311">
    <property type="term" value="F:double-stranded DNA 3'-5' DNA exonuclease activity"/>
    <property type="evidence" value="ECO:0007669"/>
    <property type="project" value="UniProtKB-EC"/>
</dbReference>
<dbReference type="GO" id="GO:0004519">
    <property type="term" value="F:endonuclease activity"/>
    <property type="evidence" value="ECO:0007669"/>
    <property type="project" value="InterPro"/>
</dbReference>
<dbReference type="GO" id="GO:0046872">
    <property type="term" value="F:metal ion binding"/>
    <property type="evidence" value="ECO:0007669"/>
    <property type="project" value="UniProtKB-KW"/>
</dbReference>
<dbReference type="GO" id="GO:0006281">
    <property type="term" value="P:DNA repair"/>
    <property type="evidence" value="ECO:0007669"/>
    <property type="project" value="UniProtKB-KW"/>
</dbReference>
<dbReference type="CDD" id="cd09086">
    <property type="entry name" value="ExoIII-like_AP-endo"/>
    <property type="match status" value="1"/>
</dbReference>
<dbReference type="FunFam" id="3.60.10.10:FF:000006">
    <property type="entry name" value="Exodeoxyribonuclease III"/>
    <property type="match status" value="1"/>
</dbReference>
<dbReference type="Gene3D" id="3.60.10.10">
    <property type="entry name" value="Endonuclease/exonuclease/phosphatase"/>
    <property type="match status" value="1"/>
</dbReference>
<dbReference type="InterPro" id="IPR004808">
    <property type="entry name" value="AP_endonuc_1"/>
</dbReference>
<dbReference type="InterPro" id="IPR020847">
    <property type="entry name" value="AP_endonuclease_F1_BS"/>
</dbReference>
<dbReference type="InterPro" id="IPR020848">
    <property type="entry name" value="AP_endonuclease_F1_CS"/>
</dbReference>
<dbReference type="InterPro" id="IPR036691">
    <property type="entry name" value="Endo/exonu/phosph_ase_sf"/>
</dbReference>
<dbReference type="InterPro" id="IPR005135">
    <property type="entry name" value="Endo/exonuclease/phosphatase"/>
</dbReference>
<dbReference type="InterPro" id="IPR037493">
    <property type="entry name" value="ExoIII-like"/>
</dbReference>
<dbReference type="NCBIfam" id="TIGR00195">
    <property type="entry name" value="exoDNase_III"/>
    <property type="match status" value="1"/>
</dbReference>
<dbReference type="NCBIfam" id="NF008733">
    <property type="entry name" value="PRK11756.1"/>
    <property type="match status" value="1"/>
</dbReference>
<dbReference type="NCBIfam" id="TIGR00633">
    <property type="entry name" value="xth"/>
    <property type="match status" value="1"/>
</dbReference>
<dbReference type="PANTHER" id="PTHR43250">
    <property type="entry name" value="EXODEOXYRIBONUCLEASE III"/>
    <property type="match status" value="1"/>
</dbReference>
<dbReference type="PANTHER" id="PTHR43250:SF2">
    <property type="entry name" value="EXODEOXYRIBONUCLEASE III"/>
    <property type="match status" value="1"/>
</dbReference>
<dbReference type="Pfam" id="PF03372">
    <property type="entry name" value="Exo_endo_phos"/>
    <property type="match status" value="1"/>
</dbReference>
<dbReference type="SUPFAM" id="SSF56219">
    <property type="entry name" value="DNase I-like"/>
    <property type="match status" value="1"/>
</dbReference>
<dbReference type="PROSITE" id="PS00726">
    <property type="entry name" value="AP_NUCLEASE_F1_1"/>
    <property type="match status" value="1"/>
</dbReference>
<dbReference type="PROSITE" id="PS00727">
    <property type="entry name" value="AP_NUCLEASE_F1_2"/>
    <property type="match status" value="1"/>
</dbReference>
<dbReference type="PROSITE" id="PS00728">
    <property type="entry name" value="AP_NUCLEASE_F1_3"/>
    <property type="match status" value="1"/>
</dbReference>
<dbReference type="PROSITE" id="PS51435">
    <property type="entry name" value="AP_NUCLEASE_F1_4"/>
    <property type="match status" value="1"/>
</dbReference>
<gene>
    <name type="primary">xthA</name>
    <name type="ordered locus">STY1812</name>
    <name type="ordered locus">t1181</name>
</gene>